<comment type="miscellaneous">
    <text>UMS2 is essential for vegetative growth.</text>
</comment>
<comment type="similarity">
    <text evidence="2">Belongs to the heat shock protein 70 family.</text>
</comment>
<accession>P18694</accession>
<accession>A0A0D1DX88</accession>
<accession>Q4P7X2</accession>
<keyword id="KW-0067">ATP-binding</keyword>
<keyword id="KW-0547">Nucleotide-binding</keyword>
<keyword id="KW-1185">Reference proteome</keyword>
<keyword id="KW-0346">Stress response</keyword>
<organism>
    <name type="scientific">Mycosarcoma maydis</name>
    <name type="common">Corn smut fungus</name>
    <name type="synonym">Ustilago maydis</name>
    <dbReference type="NCBI Taxonomy" id="5270"/>
    <lineage>
        <taxon>Eukaryota</taxon>
        <taxon>Fungi</taxon>
        <taxon>Dikarya</taxon>
        <taxon>Basidiomycota</taxon>
        <taxon>Ustilaginomycotina</taxon>
        <taxon>Ustilaginomycetes</taxon>
        <taxon>Ustilaginales</taxon>
        <taxon>Ustilaginaceae</taxon>
        <taxon>Mycosarcoma</taxon>
    </lineage>
</organism>
<protein>
    <recommendedName>
        <fullName>Heat shock 70 kDa protein 2</fullName>
    </recommendedName>
</protein>
<gene>
    <name type="primary">UMS2</name>
    <name type="ORF">UMAG_03791</name>
</gene>
<dbReference type="EMBL" id="CM003149">
    <property type="protein sequence ID" value="KIS68211.1"/>
    <property type="molecule type" value="Genomic_DNA"/>
</dbReference>
<dbReference type="PIR" id="S05375">
    <property type="entry name" value="S05375"/>
</dbReference>
<dbReference type="RefSeq" id="XP_011390235.1">
    <property type="nucleotide sequence ID" value="XM_011391933.1"/>
</dbReference>
<dbReference type="SMR" id="P18694"/>
<dbReference type="FunCoup" id="P18694">
    <property type="interactions" value="392"/>
</dbReference>
<dbReference type="STRING" id="237631.P18694"/>
<dbReference type="EnsemblFungi" id="KIS68211">
    <property type="protein sequence ID" value="KIS68211"/>
    <property type="gene ID" value="UMAG_03791"/>
</dbReference>
<dbReference type="GeneID" id="23564150"/>
<dbReference type="KEGG" id="uma:UMAG_03791"/>
<dbReference type="VEuPathDB" id="FungiDB:UMAG_03791"/>
<dbReference type="eggNOG" id="KOG0101">
    <property type="taxonomic scope" value="Eukaryota"/>
</dbReference>
<dbReference type="HOGENOM" id="CLU_005965_2_1_1"/>
<dbReference type="InParanoid" id="P18694"/>
<dbReference type="OMA" id="CNPIMTR"/>
<dbReference type="OrthoDB" id="2401965at2759"/>
<dbReference type="Proteomes" id="UP000000561">
    <property type="component" value="Chromosome 10"/>
</dbReference>
<dbReference type="GO" id="GO:0005737">
    <property type="term" value="C:cytoplasm"/>
    <property type="evidence" value="ECO:0000318"/>
    <property type="project" value="GO_Central"/>
</dbReference>
<dbReference type="GO" id="GO:0005829">
    <property type="term" value="C:cytosol"/>
    <property type="evidence" value="ECO:0000318"/>
    <property type="project" value="GO_Central"/>
</dbReference>
<dbReference type="GO" id="GO:0005634">
    <property type="term" value="C:nucleus"/>
    <property type="evidence" value="ECO:0000318"/>
    <property type="project" value="GO_Central"/>
</dbReference>
<dbReference type="GO" id="GO:0005886">
    <property type="term" value="C:plasma membrane"/>
    <property type="evidence" value="ECO:0000318"/>
    <property type="project" value="GO_Central"/>
</dbReference>
<dbReference type="GO" id="GO:0005524">
    <property type="term" value="F:ATP binding"/>
    <property type="evidence" value="ECO:0007669"/>
    <property type="project" value="UniProtKB-KW"/>
</dbReference>
<dbReference type="GO" id="GO:0016887">
    <property type="term" value="F:ATP hydrolysis activity"/>
    <property type="evidence" value="ECO:0000318"/>
    <property type="project" value="GO_Central"/>
</dbReference>
<dbReference type="GO" id="GO:0140662">
    <property type="term" value="F:ATP-dependent protein folding chaperone"/>
    <property type="evidence" value="ECO:0007669"/>
    <property type="project" value="InterPro"/>
</dbReference>
<dbReference type="GO" id="GO:0031072">
    <property type="term" value="F:heat shock protein binding"/>
    <property type="evidence" value="ECO:0000318"/>
    <property type="project" value="GO_Central"/>
</dbReference>
<dbReference type="GO" id="GO:0044183">
    <property type="term" value="F:protein folding chaperone"/>
    <property type="evidence" value="ECO:0000318"/>
    <property type="project" value="GO_Central"/>
</dbReference>
<dbReference type="GO" id="GO:0051085">
    <property type="term" value="P:chaperone cofactor-dependent protein refolding"/>
    <property type="evidence" value="ECO:0000318"/>
    <property type="project" value="GO_Central"/>
</dbReference>
<dbReference type="GO" id="GO:0042026">
    <property type="term" value="P:protein refolding"/>
    <property type="evidence" value="ECO:0000318"/>
    <property type="project" value="GO_Central"/>
</dbReference>
<dbReference type="CDD" id="cd10233">
    <property type="entry name" value="ASKHA_NBD_HSP70_HSPA1"/>
    <property type="match status" value="1"/>
</dbReference>
<dbReference type="FunFam" id="2.60.34.10:FF:000002">
    <property type="entry name" value="Heat shock 70 kDa"/>
    <property type="match status" value="1"/>
</dbReference>
<dbReference type="FunFam" id="3.90.640.10:FF:000002">
    <property type="entry name" value="Heat shock 70 kDa"/>
    <property type="match status" value="1"/>
</dbReference>
<dbReference type="FunFam" id="3.30.420.40:FF:000172">
    <property type="entry name" value="Heat shock 70 kDa protein"/>
    <property type="match status" value="2"/>
</dbReference>
<dbReference type="FunFam" id="3.30.30.30:FF:000001">
    <property type="entry name" value="heat shock 70 kDa protein-like"/>
    <property type="match status" value="1"/>
</dbReference>
<dbReference type="FunFam" id="3.30.420.40:FF:000028">
    <property type="entry name" value="heat shock 70 kDa protein-like"/>
    <property type="match status" value="1"/>
</dbReference>
<dbReference type="FunFam" id="1.20.1270.10:FF:000021">
    <property type="entry name" value="Heat shock protein 70"/>
    <property type="match status" value="1"/>
</dbReference>
<dbReference type="FunFam" id="3.30.420.40:FF:000026">
    <property type="entry name" value="Heat shock protein 70"/>
    <property type="match status" value="1"/>
</dbReference>
<dbReference type="Gene3D" id="1.20.1270.10">
    <property type="match status" value="1"/>
</dbReference>
<dbReference type="Gene3D" id="3.30.30.30">
    <property type="match status" value="1"/>
</dbReference>
<dbReference type="Gene3D" id="3.30.420.40">
    <property type="match status" value="2"/>
</dbReference>
<dbReference type="Gene3D" id="3.90.640.10">
    <property type="entry name" value="Actin, Chain A, domain 4"/>
    <property type="match status" value="1"/>
</dbReference>
<dbReference type="Gene3D" id="2.60.34.10">
    <property type="entry name" value="Substrate Binding Domain Of DNAk, Chain A, domain 1"/>
    <property type="match status" value="1"/>
</dbReference>
<dbReference type="InterPro" id="IPR043129">
    <property type="entry name" value="ATPase_NBD"/>
</dbReference>
<dbReference type="InterPro" id="IPR018181">
    <property type="entry name" value="Heat_shock_70_CS"/>
</dbReference>
<dbReference type="InterPro" id="IPR029048">
    <property type="entry name" value="HSP70_C_sf"/>
</dbReference>
<dbReference type="InterPro" id="IPR029047">
    <property type="entry name" value="HSP70_peptide-bd_sf"/>
</dbReference>
<dbReference type="InterPro" id="IPR013126">
    <property type="entry name" value="Hsp_70_fam"/>
</dbReference>
<dbReference type="NCBIfam" id="NF001413">
    <property type="entry name" value="PRK00290.1"/>
    <property type="match status" value="1"/>
</dbReference>
<dbReference type="PANTHER" id="PTHR19375">
    <property type="entry name" value="HEAT SHOCK PROTEIN 70KDA"/>
    <property type="match status" value="1"/>
</dbReference>
<dbReference type="Pfam" id="PF00012">
    <property type="entry name" value="HSP70"/>
    <property type="match status" value="1"/>
</dbReference>
<dbReference type="PRINTS" id="PR00301">
    <property type="entry name" value="HEATSHOCK70"/>
</dbReference>
<dbReference type="SUPFAM" id="SSF53067">
    <property type="entry name" value="Actin-like ATPase domain"/>
    <property type="match status" value="2"/>
</dbReference>
<dbReference type="SUPFAM" id="SSF100934">
    <property type="entry name" value="Heat shock protein 70kD (HSP70), C-terminal subdomain"/>
    <property type="match status" value="1"/>
</dbReference>
<dbReference type="SUPFAM" id="SSF100920">
    <property type="entry name" value="Heat shock protein 70kD (HSP70), peptide-binding domain"/>
    <property type="match status" value="1"/>
</dbReference>
<dbReference type="PROSITE" id="PS00297">
    <property type="entry name" value="HSP70_1"/>
    <property type="match status" value="1"/>
</dbReference>
<dbReference type="PROSITE" id="PS00329">
    <property type="entry name" value="HSP70_2"/>
    <property type="match status" value="1"/>
</dbReference>
<dbReference type="PROSITE" id="PS01036">
    <property type="entry name" value="HSP70_3"/>
    <property type="match status" value="1"/>
</dbReference>
<feature type="chain" id="PRO_0000078384" description="Heat shock 70 kDa protein 2">
    <location>
        <begin position="1"/>
        <end position="645"/>
    </location>
</feature>
<feature type="region of interest" description="Disordered" evidence="1">
    <location>
        <begin position="611"/>
        <end position="645"/>
    </location>
</feature>
<feature type="compositionally biased region" description="Gly residues" evidence="1">
    <location>
        <begin position="614"/>
        <end position="637"/>
    </location>
</feature>
<evidence type="ECO:0000256" key="1">
    <source>
        <dbReference type="SAM" id="MobiDB-lite"/>
    </source>
</evidence>
<evidence type="ECO:0000305" key="2"/>
<sequence>MTKAIGIDLGTTYSCVAVWQNDRVEVIANDQGNRTTPSYVAFTDSERLIGDAAKNQVAMNPHNTVFDAKRLIGRKFDDAEVQSDMKHWPFEVTSVGGKPQIRIEYKGEKKTFTPEEISSMVLLKMRETAEAYLGGTVKDAVVTVPAYFNDSQRQATKDAGIISGLNVMRIINEPTAAAIAYGLDKKTEGEKNVLIFDLGGGTFDVSLLTIEEGIFEVKATAGDTHLGGEDFDNRLVNHFVQEFKRKNKKDLTTNARALRRLRTACERAKRTLSSAAQTTIEIDSLFEGIDFYTSITRARFEELCGDLFSHTIEPVEKVLRDSKIDKGSVHEIVLVGGSTRIPKVQKLLTDFFNGRELNKSINPDEAVAYGAAVQAAILSGDTSEKTQDLLLLDVAPLSMGIETAGGVFTPLIKRNTTVPTKKSEIFSTYADNQPGVLIQVFEGERARTKDNNLLGKFELSGIPPAPRGVPQIEVTFDVDANAILNVSAAEKGTGKSEKITIRNDKGRLSSEQIEEMLKQAEQFAEEDKQALERTQAKNGLESYIYNVRNTTNEPQLKDKLEAADKEALEKIVKEGIEWLDSNTTASTDELKDKQKEIEEQVNPIMTKIYSAAGGAPGGMPGGAPGAAPGGAAPGGDDGPTVEELD</sequence>
<name>HSP72_MYCMD</name>
<reference key="1">
    <citation type="journal article" date="2006" name="Nature">
        <title>Insights from the genome of the biotrophic fungal plant pathogen Ustilago maydis.</title>
        <authorList>
            <person name="Kaemper J."/>
            <person name="Kahmann R."/>
            <person name="Boelker M."/>
            <person name="Ma L.-J."/>
            <person name="Brefort T."/>
            <person name="Saville B.J."/>
            <person name="Banuett F."/>
            <person name="Kronstad J.W."/>
            <person name="Gold S.E."/>
            <person name="Mueller O."/>
            <person name="Perlin M.H."/>
            <person name="Woesten H.A.B."/>
            <person name="de Vries R."/>
            <person name="Ruiz-Herrera J."/>
            <person name="Reynaga-Pena C.G."/>
            <person name="Snetselaar K."/>
            <person name="McCann M."/>
            <person name="Perez-Martin J."/>
            <person name="Feldbruegge M."/>
            <person name="Basse C.W."/>
            <person name="Steinberg G."/>
            <person name="Ibeas J.I."/>
            <person name="Holloman W."/>
            <person name="Guzman P."/>
            <person name="Farman M.L."/>
            <person name="Stajich J.E."/>
            <person name="Sentandreu R."/>
            <person name="Gonzalez-Prieto J.M."/>
            <person name="Kennell J.C."/>
            <person name="Molina L."/>
            <person name="Schirawski J."/>
            <person name="Mendoza-Mendoza A."/>
            <person name="Greilinger D."/>
            <person name="Muench K."/>
            <person name="Roessel N."/>
            <person name="Scherer M."/>
            <person name="Vranes M."/>
            <person name="Ladendorf O."/>
            <person name="Vincon V."/>
            <person name="Fuchs U."/>
            <person name="Sandrock B."/>
            <person name="Meng S."/>
            <person name="Ho E.C.H."/>
            <person name="Cahill M.J."/>
            <person name="Boyce K.J."/>
            <person name="Klose J."/>
            <person name="Klosterman S.J."/>
            <person name="Deelstra H.J."/>
            <person name="Ortiz-Castellanos L."/>
            <person name="Li W."/>
            <person name="Sanchez-Alonso P."/>
            <person name="Schreier P.H."/>
            <person name="Haeuser-Hahn I."/>
            <person name="Vaupel M."/>
            <person name="Koopmann E."/>
            <person name="Friedrich G."/>
            <person name="Voss H."/>
            <person name="Schlueter T."/>
            <person name="Margolis J."/>
            <person name="Platt D."/>
            <person name="Swimmer C."/>
            <person name="Gnirke A."/>
            <person name="Chen F."/>
            <person name="Vysotskaia V."/>
            <person name="Mannhaupt G."/>
            <person name="Gueldener U."/>
            <person name="Muensterkoetter M."/>
            <person name="Haase D."/>
            <person name="Oesterheld M."/>
            <person name="Mewes H.-W."/>
            <person name="Mauceli E.W."/>
            <person name="DeCaprio D."/>
            <person name="Wade C.M."/>
            <person name="Butler J."/>
            <person name="Young S.K."/>
            <person name="Jaffe D.B."/>
            <person name="Calvo S.E."/>
            <person name="Nusbaum C."/>
            <person name="Galagan J.E."/>
            <person name="Birren B.W."/>
        </authorList>
    </citation>
    <scope>NUCLEOTIDE SEQUENCE [LARGE SCALE GENOMIC DNA]</scope>
    <source>
        <strain>DSM 14603 / FGSC 9021 / UM521</strain>
    </source>
</reference>
<reference key="2">
    <citation type="submission" date="2014-09" db="EMBL/GenBank/DDBJ databases">
        <authorList>
            <person name="Gueldener U."/>
            <person name="Muensterkoetter M."/>
            <person name="Walter M.C."/>
            <person name="Mannhaupt G."/>
            <person name="Kahmann R."/>
        </authorList>
    </citation>
    <scope>GENOME REANNOTATION</scope>
    <source>
        <strain>DSM 14603 / FGSC 9021 / UM521</strain>
    </source>
</reference>
<reference key="3">
    <citation type="journal article" date="1989" name="EMBO J.">
        <title>Mutation in a heat-regulated hsp70 gene of Ustilago maydis.</title>
        <authorList>
            <person name="Holden D.W."/>
            <person name="Kronstad J.W."/>
            <person name="Leong S.A."/>
        </authorList>
    </citation>
    <scope>NUCLEOTIDE SEQUENCE [GENOMIC DNA] OF 1-90</scope>
</reference>
<proteinExistence type="inferred from homology"/>